<feature type="chain" id="PRO_1000005559" description="Large ribosomal subunit protein uL10">
    <location>
        <begin position="1"/>
        <end position="175"/>
    </location>
</feature>
<evidence type="ECO:0000255" key="1">
    <source>
        <dbReference type="HAMAP-Rule" id="MF_00362"/>
    </source>
</evidence>
<evidence type="ECO:0000305" key="2"/>
<accession>A2BNZ7</accession>
<comment type="function">
    <text evidence="1">Forms part of the ribosomal stalk, playing a central role in the interaction of the ribosome with GTP-bound translation factors.</text>
</comment>
<comment type="subunit">
    <text evidence="1">Part of the ribosomal stalk of the 50S ribosomal subunit. The N-terminus interacts with L11 and the large rRNA to form the base of the stalk. The C-terminus forms an elongated spine to which L12 dimers bind in a sequential fashion forming a multimeric L10(L12)X complex.</text>
</comment>
<comment type="similarity">
    <text evidence="1">Belongs to the universal ribosomal protein uL10 family.</text>
</comment>
<protein>
    <recommendedName>
        <fullName evidence="1">Large ribosomal subunit protein uL10</fullName>
    </recommendedName>
    <alternativeName>
        <fullName evidence="2">50S ribosomal protein L10</fullName>
    </alternativeName>
</protein>
<gene>
    <name evidence="1" type="primary">rplJ</name>
    <name evidence="1" type="synonym">rpl10</name>
    <name type="ordered locus">A9601_02201</name>
</gene>
<sequence>MGRTLENKQKIVTEIKSLLDDSEMAVVLDYKGLTIKEMSDLRSRLQTTNGICKVTKNSLMRKAIDGDSNWNDLESLLTGTNAFVLIKEDVGGAVKAIQSFQKDTKKSETKGALFEGRLLSDSEIKEIASLPSKEVLMAKIAGALNGVATKIAISINEVPSGLARSLKQHSEKSES</sequence>
<proteinExistence type="inferred from homology"/>
<keyword id="KW-0687">Ribonucleoprotein</keyword>
<keyword id="KW-0689">Ribosomal protein</keyword>
<keyword id="KW-0694">RNA-binding</keyword>
<keyword id="KW-0699">rRNA-binding</keyword>
<organism>
    <name type="scientific">Prochlorococcus marinus (strain AS9601)</name>
    <dbReference type="NCBI Taxonomy" id="146891"/>
    <lineage>
        <taxon>Bacteria</taxon>
        <taxon>Bacillati</taxon>
        <taxon>Cyanobacteriota</taxon>
        <taxon>Cyanophyceae</taxon>
        <taxon>Synechococcales</taxon>
        <taxon>Prochlorococcaceae</taxon>
        <taxon>Prochlorococcus</taxon>
    </lineage>
</organism>
<name>RL10_PROMS</name>
<reference key="1">
    <citation type="journal article" date="2007" name="PLoS Genet.">
        <title>Patterns and implications of gene gain and loss in the evolution of Prochlorococcus.</title>
        <authorList>
            <person name="Kettler G.C."/>
            <person name="Martiny A.C."/>
            <person name="Huang K."/>
            <person name="Zucker J."/>
            <person name="Coleman M.L."/>
            <person name="Rodrigue S."/>
            <person name="Chen F."/>
            <person name="Lapidus A."/>
            <person name="Ferriera S."/>
            <person name="Johnson J."/>
            <person name="Steglich C."/>
            <person name="Church G.M."/>
            <person name="Richardson P."/>
            <person name="Chisholm S.W."/>
        </authorList>
    </citation>
    <scope>NUCLEOTIDE SEQUENCE [LARGE SCALE GENOMIC DNA]</scope>
    <source>
        <strain>AS9601</strain>
    </source>
</reference>
<dbReference type="EMBL" id="CP000551">
    <property type="protein sequence ID" value="ABM69508.1"/>
    <property type="molecule type" value="Genomic_DNA"/>
</dbReference>
<dbReference type="RefSeq" id="WP_011817695.1">
    <property type="nucleotide sequence ID" value="NC_008816.1"/>
</dbReference>
<dbReference type="SMR" id="A2BNZ7"/>
<dbReference type="STRING" id="146891.A9601_02201"/>
<dbReference type="KEGG" id="pmb:A9601_02201"/>
<dbReference type="eggNOG" id="COG0244">
    <property type="taxonomic scope" value="Bacteria"/>
</dbReference>
<dbReference type="HOGENOM" id="CLU_092227_1_1_3"/>
<dbReference type="OrthoDB" id="9808307at2"/>
<dbReference type="Proteomes" id="UP000002590">
    <property type="component" value="Chromosome"/>
</dbReference>
<dbReference type="GO" id="GO:1990904">
    <property type="term" value="C:ribonucleoprotein complex"/>
    <property type="evidence" value="ECO:0007669"/>
    <property type="project" value="UniProtKB-KW"/>
</dbReference>
<dbReference type="GO" id="GO:0005840">
    <property type="term" value="C:ribosome"/>
    <property type="evidence" value="ECO:0007669"/>
    <property type="project" value="UniProtKB-KW"/>
</dbReference>
<dbReference type="GO" id="GO:0070180">
    <property type="term" value="F:large ribosomal subunit rRNA binding"/>
    <property type="evidence" value="ECO:0007669"/>
    <property type="project" value="UniProtKB-UniRule"/>
</dbReference>
<dbReference type="GO" id="GO:0006412">
    <property type="term" value="P:translation"/>
    <property type="evidence" value="ECO:0007669"/>
    <property type="project" value="UniProtKB-UniRule"/>
</dbReference>
<dbReference type="CDD" id="cd05797">
    <property type="entry name" value="Ribosomal_L10"/>
    <property type="match status" value="1"/>
</dbReference>
<dbReference type="Gene3D" id="3.30.70.1730">
    <property type="match status" value="1"/>
</dbReference>
<dbReference type="Gene3D" id="6.10.250.290">
    <property type="match status" value="1"/>
</dbReference>
<dbReference type="HAMAP" id="MF_00362">
    <property type="entry name" value="Ribosomal_uL10"/>
    <property type="match status" value="1"/>
</dbReference>
<dbReference type="InterPro" id="IPR001790">
    <property type="entry name" value="Ribosomal_uL10"/>
</dbReference>
<dbReference type="InterPro" id="IPR043141">
    <property type="entry name" value="Ribosomal_uL10-like_sf"/>
</dbReference>
<dbReference type="InterPro" id="IPR022973">
    <property type="entry name" value="Ribosomal_uL10_bac"/>
</dbReference>
<dbReference type="InterPro" id="IPR047865">
    <property type="entry name" value="Ribosomal_uL10_bac_type"/>
</dbReference>
<dbReference type="NCBIfam" id="NF000955">
    <property type="entry name" value="PRK00099.1-1"/>
    <property type="match status" value="1"/>
</dbReference>
<dbReference type="PANTHER" id="PTHR11560">
    <property type="entry name" value="39S RIBOSOMAL PROTEIN L10, MITOCHONDRIAL"/>
    <property type="match status" value="1"/>
</dbReference>
<dbReference type="Pfam" id="PF00466">
    <property type="entry name" value="Ribosomal_L10"/>
    <property type="match status" value="1"/>
</dbReference>
<dbReference type="SUPFAM" id="SSF160369">
    <property type="entry name" value="Ribosomal protein L10-like"/>
    <property type="match status" value="1"/>
</dbReference>